<protein>
    <recommendedName>
        <fullName evidence="4">dTDP-glucose 4,6-dehydratase</fullName>
        <ecNumber evidence="3">4.2.1.46</ecNumber>
    </recommendedName>
</protein>
<evidence type="ECO:0000250" key="1">
    <source>
        <dbReference type="UniProtKB" id="P26391"/>
    </source>
</evidence>
<evidence type="ECO:0000250" key="2">
    <source>
        <dbReference type="UniProtKB" id="P27830"/>
    </source>
</evidence>
<evidence type="ECO:0000269" key="3">
    <source>
    </source>
</evidence>
<evidence type="ECO:0000303" key="4">
    <source>
    </source>
</evidence>
<evidence type="ECO:0000305" key="5"/>
<accession>Q6E7F4</accession>
<organism>
    <name type="scientific">Escherichia coli</name>
    <dbReference type="NCBI Taxonomy" id="562"/>
    <lineage>
        <taxon>Bacteria</taxon>
        <taxon>Pseudomonadati</taxon>
        <taxon>Pseudomonadota</taxon>
        <taxon>Gammaproteobacteria</taxon>
        <taxon>Enterobacterales</taxon>
        <taxon>Enterobacteriaceae</taxon>
        <taxon>Escherichia</taxon>
    </lineage>
</organism>
<gene>
    <name type="primary">rmlB</name>
</gene>
<comment type="function">
    <text evidence="3">Catalyzes the dehydration of dTDP-D-glucose to form dTDP-4-dehydro-6-deoxy-D-glucose via a three-step process involving oxidation, dehydration and reduction. This reaction is a step in the biosynthesis of D-fucofuranose, a component of E.coli O52 O antigen.</text>
</comment>
<comment type="catalytic activity">
    <reaction evidence="3">
        <text>dTDP-alpha-D-glucose = dTDP-4-dehydro-6-deoxy-alpha-D-glucose + H2O</text>
        <dbReference type="Rhea" id="RHEA:17221"/>
        <dbReference type="ChEBI" id="CHEBI:15377"/>
        <dbReference type="ChEBI" id="CHEBI:57477"/>
        <dbReference type="ChEBI" id="CHEBI:57649"/>
        <dbReference type="EC" id="4.2.1.46"/>
    </reaction>
</comment>
<comment type="cofactor">
    <cofactor evidence="2">
        <name>NAD(+)</name>
        <dbReference type="ChEBI" id="CHEBI:57540"/>
    </cofactor>
    <text evidence="2">Binds 1 NAD(+) per subunit.</text>
</comment>
<comment type="pathway">
    <text evidence="3">Bacterial outer membrane biogenesis; LPS O-antigen biosynthesis.</text>
</comment>
<comment type="similarity">
    <text evidence="5">Belongs to the NAD(P)-dependent epimerase/dehydratase family. dTDP-glucose dehydratase subfamily.</text>
</comment>
<name>RMLB2_ECOLX</name>
<reference key="1">
    <citation type="journal article" date="2004" name="J. Bacteriol.">
        <title>Synthesis of the heteropolysaccharide O antigen of Escherichia coli O52 requires an ABC transporter: structural and genetic evidence.</title>
        <authorList>
            <person name="Feng L."/>
            <person name="Senchenkova S.N."/>
            <person name="Yang J."/>
            <person name="Shashkov A.S."/>
            <person name="Tao J."/>
            <person name="Guo H."/>
            <person name="Cheng J."/>
            <person name="Ren Y."/>
            <person name="Knirel Y.A."/>
            <person name="Reeves P.R."/>
            <person name="Wang L."/>
        </authorList>
    </citation>
    <scope>NUCLEOTIDE SEQUENCE [GENOMIC DNA]</scope>
    <source>
        <strain>O52 / G1066</strain>
    </source>
</reference>
<reference key="2">
    <citation type="journal article" date="2008" name="Mol. Microbiol.">
        <title>Characterization of the dTDP-D-fucofuranose biosynthetic pathway in Escherichia coli O52.</title>
        <authorList>
            <person name="Wang Q."/>
            <person name="Ding P."/>
            <person name="Perepelov A.V."/>
            <person name="Xu Y."/>
            <person name="Wang Y."/>
            <person name="Knirel Y.A."/>
            <person name="Wang L."/>
            <person name="Feng L."/>
        </authorList>
    </citation>
    <scope>FUNCTION</scope>
    <scope>CATALYTIC ACTIVITY</scope>
    <scope>PATHWAY</scope>
    <source>
        <strain>O52 / G1066</strain>
    </source>
</reference>
<dbReference type="EC" id="4.2.1.46" evidence="3"/>
<dbReference type="EMBL" id="AY528413">
    <property type="protein sequence ID" value="AAS99159.1"/>
    <property type="molecule type" value="Genomic_DNA"/>
</dbReference>
<dbReference type="RefSeq" id="WP_001575913.1">
    <property type="nucleotide sequence ID" value="NZ_CAJHTT010000042.1"/>
</dbReference>
<dbReference type="SMR" id="Q6E7F4"/>
<dbReference type="BioCyc" id="MetaCyc:MONOMER-18133"/>
<dbReference type="UniPathway" id="UPA00281"/>
<dbReference type="GO" id="GO:0008460">
    <property type="term" value="F:dTDP-glucose 4,6-dehydratase activity"/>
    <property type="evidence" value="ECO:0007669"/>
    <property type="project" value="UniProtKB-EC"/>
</dbReference>
<dbReference type="GO" id="GO:0009225">
    <property type="term" value="P:nucleotide-sugar metabolic process"/>
    <property type="evidence" value="ECO:0007669"/>
    <property type="project" value="InterPro"/>
</dbReference>
<dbReference type="GO" id="GO:0009243">
    <property type="term" value="P:O antigen biosynthetic process"/>
    <property type="evidence" value="ECO:0007669"/>
    <property type="project" value="UniProtKB-UniPathway"/>
</dbReference>
<dbReference type="CDD" id="cd05246">
    <property type="entry name" value="dTDP_GD_SDR_e"/>
    <property type="match status" value="1"/>
</dbReference>
<dbReference type="FunFam" id="3.40.50.720:FF:000108">
    <property type="entry name" value="dTDP-glucose 4,6-dehydratase"/>
    <property type="match status" value="1"/>
</dbReference>
<dbReference type="Gene3D" id="3.40.50.720">
    <property type="entry name" value="NAD(P)-binding Rossmann-like Domain"/>
    <property type="match status" value="1"/>
</dbReference>
<dbReference type="Gene3D" id="3.90.25.10">
    <property type="entry name" value="UDP-galactose 4-epimerase, domain 1"/>
    <property type="match status" value="1"/>
</dbReference>
<dbReference type="InterPro" id="IPR005888">
    <property type="entry name" value="dTDP_Gluc_deHydtase"/>
</dbReference>
<dbReference type="InterPro" id="IPR016040">
    <property type="entry name" value="NAD(P)-bd_dom"/>
</dbReference>
<dbReference type="InterPro" id="IPR036291">
    <property type="entry name" value="NAD(P)-bd_dom_sf"/>
</dbReference>
<dbReference type="NCBIfam" id="TIGR01181">
    <property type="entry name" value="dTDP_gluc_dehyt"/>
    <property type="match status" value="1"/>
</dbReference>
<dbReference type="NCBIfam" id="NF007490">
    <property type="entry name" value="PRK10084.1"/>
    <property type="match status" value="1"/>
</dbReference>
<dbReference type="PANTHER" id="PTHR43000">
    <property type="entry name" value="DTDP-D-GLUCOSE 4,6-DEHYDRATASE-RELATED"/>
    <property type="match status" value="1"/>
</dbReference>
<dbReference type="Pfam" id="PF16363">
    <property type="entry name" value="GDP_Man_Dehyd"/>
    <property type="match status" value="1"/>
</dbReference>
<dbReference type="SUPFAM" id="SSF51735">
    <property type="entry name" value="NAD(P)-binding Rossmann-fold domains"/>
    <property type="match status" value="1"/>
</dbReference>
<proteinExistence type="evidence at protein level"/>
<feature type="chain" id="PRO_0000425108" description="dTDP-glucose 4,6-dehydratase">
    <location>
        <begin position="1"/>
        <end position="362"/>
    </location>
</feature>
<feature type="active site" description="Proton donor" evidence="2">
    <location>
        <position position="134"/>
    </location>
</feature>
<feature type="active site" description="Proton acceptor" evidence="2">
    <location>
        <position position="135"/>
    </location>
</feature>
<feature type="active site" description="Proton acceptor" evidence="2">
    <location>
        <position position="167"/>
    </location>
</feature>
<feature type="binding site" evidence="2">
    <location>
        <begin position="11"/>
        <end position="12"/>
    </location>
    <ligand>
        <name>NAD(+)</name>
        <dbReference type="ChEBI" id="CHEBI:57540"/>
    </ligand>
</feature>
<feature type="binding site" evidence="2">
    <location>
        <begin position="32"/>
        <end position="35"/>
    </location>
    <ligand>
        <name>NAD(+)</name>
        <dbReference type="ChEBI" id="CHEBI:57540"/>
    </ligand>
</feature>
<feature type="binding site" evidence="2">
    <location>
        <begin position="58"/>
        <end position="59"/>
    </location>
    <ligand>
        <name>NAD(+)</name>
        <dbReference type="ChEBI" id="CHEBI:57540"/>
    </ligand>
</feature>
<feature type="binding site" evidence="2">
    <location>
        <begin position="80"/>
        <end position="84"/>
    </location>
    <ligand>
        <name>NAD(+)</name>
        <dbReference type="ChEBI" id="CHEBI:57540"/>
    </ligand>
</feature>
<feature type="binding site" evidence="1">
    <location>
        <position position="84"/>
    </location>
    <ligand>
        <name>substrate</name>
    </ligand>
</feature>
<feature type="binding site" evidence="2">
    <location>
        <position position="99"/>
    </location>
    <ligand>
        <name>NAD(+)</name>
        <dbReference type="ChEBI" id="CHEBI:57540"/>
    </ligand>
</feature>
<feature type="binding site" evidence="1">
    <location>
        <position position="133"/>
    </location>
    <ligand>
        <name>substrate</name>
    </ligand>
</feature>
<feature type="binding site" evidence="2">
    <location>
        <begin position="167"/>
        <end position="171"/>
    </location>
    <ligand>
        <name>NAD(+)</name>
        <dbReference type="ChEBI" id="CHEBI:57540"/>
    </ligand>
</feature>
<feature type="binding site" evidence="1">
    <location>
        <position position="196"/>
    </location>
    <ligand>
        <name>substrate</name>
    </ligand>
</feature>
<feature type="binding site" evidence="2">
    <location>
        <position position="197"/>
    </location>
    <ligand>
        <name>NAD(+)</name>
        <dbReference type="ChEBI" id="CHEBI:57540"/>
    </ligand>
</feature>
<feature type="binding site" evidence="1">
    <location>
        <begin position="206"/>
        <end position="207"/>
    </location>
    <ligand>
        <name>substrate</name>
    </ligand>
</feature>
<feature type="binding site" evidence="1">
    <location>
        <begin position="222"/>
        <end position="224"/>
    </location>
    <ligand>
        <name>substrate</name>
    </ligand>
</feature>
<feature type="binding site" evidence="1">
    <location>
        <position position="231"/>
    </location>
    <ligand>
        <name>substrate</name>
    </ligand>
</feature>
<feature type="binding site" evidence="1">
    <location>
        <position position="266"/>
    </location>
    <ligand>
        <name>substrate</name>
    </ligand>
</feature>
<feature type="binding site" evidence="1">
    <location>
        <begin position="300"/>
        <end position="304"/>
    </location>
    <ligand>
        <name>substrate</name>
    </ligand>
</feature>
<keyword id="KW-0119">Carbohydrate metabolism</keyword>
<keyword id="KW-0448">Lipopolysaccharide biosynthesis</keyword>
<keyword id="KW-0456">Lyase</keyword>
<keyword id="KW-0520">NAD</keyword>
<sequence>MKILVTGGAGFIGSAVVRHIINNTQDSVINVDKLTYAGNLESLTEIENNERYKFEHADICDSVAIANIFAHHQPDAIMHLAAESHVDRSITGPADFIETNIVGTYILLEEARKYWLALSEDRKGAFRFHHISTDEVYGDLPHPDEVSSDTILPLFTEQTSYSPSSPYSASKASSDHLVRAWRRTYGLPTIVTNCSNNYGPYHFPEKLIPLIILNAIAGKLLPVYGNGEQIRDWLYVEDHARALYEVVTKGVPGETYNIGGHNERKNIDVVKTICRILDELIADKPDGIENFEQLIRYVSDRPGHDLRYAIDASKIKQDLGWVPQETFETGITKTIHWYLNNKEWWQRVMDGSYAGERLGLVE</sequence>